<proteinExistence type="inferred from homology"/>
<name>DCD_RICAH</name>
<feature type="chain" id="PRO_1000009799" description="dCTP deaminase">
    <location>
        <begin position="1"/>
        <end position="188"/>
    </location>
</feature>
<feature type="active site" description="Proton donor/acceptor" evidence="1">
    <location>
        <position position="137"/>
    </location>
</feature>
<feature type="binding site" evidence="1">
    <location>
        <begin position="111"/>
        <end position="116"/>
    </location>
    <ligand>
        <name>dCTP</name>
        <dbReference type="ChEBI" id="CHEBI:61481"/>
    </ligand>
</feature>
<feature type="binding site" evidence="1">
    <location>
        <begin position="135"/>
        <end position="137"/>
    </location>
    <ligand>
        <name>dCTP</name>
        <dbReference type="ChEBI" id="CHEBI:61481"/>
    </ligand>
</feature>
<feature type="binding site" evidence="1">
    <location>
        <position position="156"/>
    </location>
    <ligand>
        <name>dCTP</name>
        <dbReference type="ChEBI" id="CHEBI:61481"/>
    </ligand>
</feature>
<feature type="binding site" evidence="1">
    <location>
        <position position="170"/>
    </location>
    <ligand>
        <name>dCTP</name>
        <dbReference type="ChEBI" id="CHEBI:61481"/>
    </ligand>
</feature>
<feature type="binding site" evidence="1">
    <location>
        <position position="179"/>
    </location>
    <ligand>
        <name>dCTP</name>
        <dbReference type="ChEBI" id="CHEBI:61481"/>
    </ligand>
</feature>
<feature type="binding site" evidence="1">
    <location>
        <position position="180"/>
    </location>
    <ligand>
        <name>dCTP</name>
        <dbReference type="ChEBI" id="CHEBI:61481"/>
    </ligand>
</feature>
<gene>
    <name evidence="1" type="primary">dcd</name>
    <name type="ordered locus">A1C_00540</name>
</gene>
<dbReference type="EC" id="3.5.4.13" evidence="1"/>
<dbReference type="EMBL" id="CP000847">
    <property type="protein sequence ID" value="ABV74441.1"/>
    <property type="molecule type" value="Genomic_DNA"/>
</dbReference>
<dbReference type="RefSeq" id="WP_012013311.1">
    <property type="nucleotide sequence ID" value="NC_009881.1"/>
</dbReference>
<dbReference type="SMR" id="A8GM16"/>
<dbReference type="STRING" id="293614.A1C_00540"/>
<dbReference type="KEGG" id="rak:A1C_00540"/>
<dbReference type="eggNOG" id="COG0717">
    <property type="taxonomic scope" value="Bacteria"/>
</dbReference>
<dbReference type="HOGENOM" id="CLU_087476_4_0_5"/>
<dbReference type="UniPathway" id="UPA00610">
    <property type="reaction ID" value="UER00665"/>
</dbReference>
<dbReference type="Proteomes" id="UP000006830">
    <property type="component" value="Chromosome"/>
</dbReference>
<dbReference type="GO" id="GO:0008829">
    <property type="term" value="F:dCTP deaminase activity"/>
    <property type="evidence" value="ECO:0007669"/>
    <property type="project" value="UniProtKB-UniRule"/>
</dbReference>
<dbReference type="GO" id="GO:0000166">
    <property type="term" value="F:nucleotide binding"/>
    <property type="evidence" value="ECO:0007669"/>
    <property type="project" value="UniProtKB-KW"/>
</dbReference>
<dbReference type="GO" id="GO:0006226">
    <property type="term" value="P:dUMP biosynthetic process"/>
    <property type="evidence" value="ECO:0007669"/>
    <property type="project" value="UniProtKB-UniPathway"/>
</dbReference>
<dbReference type="GO" id="GO:0006229">
    <property type="term" value="P:dUTP biosynthetic process"/>
    <property type="evidence" value="ECO:0007669"/>
    <property type="project" value="UniProtKB-UniRule"/>
</dbReference>
<dbReference type="CDD" id="cd07557">
    <property type="entry name" value="trimeric_dUTPase"/>
    <property type="match status" value="1"/>
</dbReference>
<dbReference type="FunFam" id="2.70.40.10:FF:000001">
    <property type="entry name" value="dCTP deaminase"/>
    <property type="match status" value="1"/>
</dbReference>
<dbReference type="Gene3D" id="2.70.40.10">
    <property type="match status" value="1"/>
</dbReference>
<dbReference type="HAMAP" id="MF_00146">
    <property type="entry name" value="dCTP_deaminase"/>
    <property type="match status" value="1"/>
</dbReference>
<dbReference type="InterPro" id="IPR011962">
    <property type="entry name" value="dCTP_deaminase"/>
</dbReference>
<dbReference type="InterPro" id="IPR036157">
    <property type="entry name" value="dUTPase-like_sf"/>
</dbReference>
<dbReference type="InterPro" id="IPR033704">
    <property type="entry name" value="dUTPase_trimeric"/>
</dbReference>
<dbReference type="NCBIfam" id="TIGR02274">
    <property type="entry name" value="dCTP_deam"/>
    <property type="match status" value="1"/>
</dbReference>
<dbReference type="PANTHER" id="PTHR42680">
    <property type="entry name" value="DCTP DEAMINASE"/>
    <property type="match status" value="1"/>
</dbReference>
<dbReference type="PANTHER" id="PTHR42680:SF3">
    <property type="entry name" value="DCTP DEAMINASE"/>
    <property type="match status" value="1"/>
</dbReference>
<dbReference type="Pfam" id="PF22769">
    <property type="entry name" value="DCD"/>
    <property type="match status" value="1"/>
</dbReference>
<dbReference type="SUPFAM" id="SSF51283">
    <property type="entry name" value="dUTPase-like"/>
    <property type="match status" value="1"/>
</dbReference>
<reference key="1">
    <citation type="submission" date="2007-09" db="EMBL/GenBank/DDBJ databases">
        <title>Complete genome sequence of Rickettsia akari.</title>
        <authorList>
            <person name="Madan A."/>
            <person name="Fahey J."/>
            <person name="Helton E."/>
            <person name="Ketteman M."/>
            <person name="Madan A."/>
            <person name="Rodrigues S."/>
            <person name="Sanchez A."/>
            <person name="Whiting M."/>
            <person name="Dasch G."/>
            <person name="Eremeeva M."/>
        </authorList>
    </citation>
    <scope>NUCLEOTIDE SEQUENCE [LARGE SCALE GENOMIC DNA]</scope>
    <source>
        <strain>Hartford</strain>
    </source>
</reference>
<accession>A8GM16</accession>
<sequence length="188" mass="21249">MAIMSDKWIKEAVINQSMISPFAEKQVRVHNKEKIISYGLSSYGYDARVSNEFKIFTNINSTTVDPKNFSEYNLVDREVDVCIIPPNSFALGRTIEYFKIPRDVLVICVGKSTYARCGIIVNVTPLEPEWEGHVTLEFSNTTPLPAKIYANEGACQFLFLKSDQICDTSYADRQGKYMKQVGVTLPLT</sequence>
<organism>
    <name type="scientific">Rickettsia akari (strain Hartford)</name>
    <dbReference type="NCBI Taxonomy" id="293614"/>
    <lineage>
        <taxon>Bacteria</taxon>
        <taxon>Pseudomonadati</taxon>
        <taxon>Pseudomonadota</taxon>
        <taxon>Alphaproteobacteria</taxon>
        <taxon>Rickettsiales</taxon>
        <taxon>Rickettsiaceae</taxon>
        <taxon>Rickettsieae</taxon>
        <taxon>Rickettsia</taxon>
        <taxon>spotted fever group</taxon>
    </lineage>
</organism>
<comment type="function">
    <text evidence="1">Catalyzes the deamination of dCTP to dUTP.</text>
</comment>
<comment type="catalytic activity">
    <reaction evidence="1">
        <text>dCTP + H2O + H(+) = dUTP + NH4(+)</text>
        <dbReference type="Rhea" id="RHEA:22680"/>
        <dbReference type="ChEBI" id="CHEBI:15377"/>
        <dbReference type="ChEBI" id="CHEBI:15378"/>
        <dbReference type="ChEBI" id="CHEBI:28938"/>
        <dbReference type="ChEBI" id="CHEBI:61481"/>
        <dbReference type="ChEBI" id="CHEBI:61555"/>
        <dbReference type="EC" id="3.5.4.13"/>
    </reaction>
</comment>
<comment type="pathway">
    <text evidence="1">Pyrimidine metabolism; dUMP biosynthesis; dUMP from dCTP (dUTP route): step 1/2.</text>
</comment>
<comment type="subunit">
    <text evidence="1">Homotrimer.</text>
</comment>
<comment type="similarity">
    <text evidence="1">Belongs to the dCTP deaminase family.</text>
</comment>
<keyword id="KW-0378">Hydrolase</keyword>
<keyword id="KW-0546">Nucleotide metabolism</keyword>
<keyword id="KW-0547">Nucleotide-binding</keyword>
<protein>
    <recommendedName>
        <fullName evidence="1">dCTP deaminase</fullName>
        <ecNumber evidence="1">3.5.4.13</ecNumber>
    </recommendedName>
    <alternativeName>
        <fullName evidence="1">Deoxycytidine triphosphate deaminase</fullName>
    </alternativeName>
</protein>
<evidence type="ECO:0000255" key="1">
    <source>
        <dbReference type="HAMAP-Rule" id="MF_00146"/>
    </source>
</evidence>